<dbReference type="EC" id="5.2.1.8"/>
<dbReference type="EMBL" id="Y15953">
    <property type="protein sequence ID" value="CAB60144.1"/>
    <property type="molecule type" value="Genomic_DNA"/>
</dbReference>
<dbReference type="SMR" id="Q9RLJ3"/>
<dbReference type="GO" id="GO:0005737">
    <property type="term" value="C:cytoplasm"/>
    <property type="evidence" value="ECO:0007669"/>
    <property type="project" value="UniProtKB-SubCell"/>
</dbReference>
<dbReference type="GO" id="GO:0003755">
    <property type="term" value="F:peptidyl-prolyl cis-trans isomerase activity"/>
    <property type="evidence" value="ECO:0007669"/>
    <property type="project" value="UniProtKB-UniRule"/>
</dbReference>
<dbReference type="GO" id="GO:0044183">
    <property type="term" value="F:protein folding chaperone"/>
    <property type="evidence" value="ECO:0007669"/>
    <property type="project" value="TreeGrafter"/>
</dbReference>
<dbReference type="GO" id="GO:0043022">
    <property type="term" value="F:ribosome binding"/>
    <property type="evidence" value="ECO:0007669"/>
    <property type="project" value="TreeGrafter"/>
</dbReference>
<dbReference type="GO" id="GO:0051083">
    <property type="term" value="P:'de novo' cotranslational protein folding"/>
    <property type="evidence" value="ECO:0007669"/>
    <property type="project" value="TreeGrafter"/>
</dbReference>
<dbReference type="GO" id="GO:0051301">
    <property type="term" value="P:cell division"/>
    <property type="evidence" value="ECO:0007669"/>
    <property type="project" value="UniProtKB-KW"/>
</dbReference>
<dbReference type="GO" id="GO:0061077">
    <property type="term" value="P:chaperone-mediated protein folding"/>
    <property type="evidence" value="ECO:0007669"/>
    <property type="project" value="TreeGrafter"/>
</dbReference>
<dbReference type="GO" id="GO:0015031">
    <property type="term" value="P:protein transport"/>
    <property type="evidence" value="ECO:0007669"/>
    <property type="project" value="UniProtKB-UniRule"/>
</dbReference>
<dbReference type="GO" id="GO:0043335">
    <property type="term" value="P:protein unfolding"/>
    <property type="evidence" value="ECO:0007669"/>
    <property type="project" value="TreeGrafter"/>
</dbReference>
<dbReference type="FunFam" id="3.10.50.40:FF:000001">
    <property type="entry name" value="Trigger factor"/>
    <property type="match status" value="1"/>
</dbReference>
<dbReference type="Gene3D" id="3.10.50.40">
    <property type="match status" value="1"/>
</dbReference>
<dbReference type="Gene3D" id="3.30.70.1050">
    <property type="entry name" value="Trigger factor ribosome-binding domain"/>
    <property type="match status" value="1"/>
</dbReference>
<dbReference type="Gene3D" id="1.10.3120.10">
    <property type="entry name" value="Trigger factor, C-terminal domain"/>
    <property type="match status" value="1"/>
</dbReference>
<dbReference type="HAMAP" id="MF_00303">
    <property type="entry name" value="Trigger_factor_Tig"/>
    <property type="match status" value="1"/>
</dbReference>
<dbReference type="InterPro" id="IPR046357">
    <property type="entry name" value="PPIase_dom_sf"/>
</dbReference>
<dbReference type="InterPro" id="IPR001179">
    <property type="entry name" value="PPIase_FKBP_dom"/>
</dbReference>
<dbReference type="InterPro" id="IPR005215">
    <property type="entry name" value="Trig_fac"/>
</dbReference>
<dbReference type="InterPro" id="IPR008880">
    <property type="entry name" value="Trigger_fac_C"/>
</dbReference>
<dbReference type="InterPro" id="IPR037041">
    <property type="entry name" value="Trigger_fac_C_sf"/>
</dbReference>
<dbReference type="InterPro" id="IPR008881">
    <property type="entry name" value="Trigger_fac_ribosome-bd_bac"/>
</dbReference>
<dbReference type="InterPro" id="IPR036611">
    <property type="entry name" value="Trigger_fac_ribosome-bd_sf"/>
</dbReference>
<dbReference type="InterPro" id="IPR027304">
    <property type="entry name" value="Trigger_fact/SurA_dom_sf"/>
</dbReference>
<dbReference type="NCBIfam" id="TIGR00115">
    <property type="entry name" value="tig"/>
    <property type="match status" value="1"/>
</dbReference>
<dbReference type="PANTHER" id="PTHR30560">
    <property type="entry name" value="TRIGGER FACTOR CHAPERONE AND PEPTIDYL-PROLYL CIS/TRANS ISOMERASE"/>
    <property type="match status" value="1"/>
</dbReference>
<dbReference type="PANTHER" id="PTHR30560:SF3">
    <property type="entry name" value="TRIGGER FACTOR-LIKE PROTEIN TIG, CHLOROPLASTIC"/>
    <property type="match status" value="1"/>
</dbReference>
<dbReference type="Pfam" id="PF00254">
    <property type="entry name" value="FKBP_C"/>
    <property type="match status" value="1"/>
</dbReference>
<dbReference type="Pfam" id="PF05698">
    <property type="entry name" value="Trigger_C"/>
    <property type="match status" value="1"/>
</dbReference>
<dbReference type="Pfam" id="PF05697">
    <property type="entry name" value="Trigger_N"/>
    <property type="match status" value="1"/>
</dbReference>
<dbReference type="PIRSF" id="PIRSF003095">
    <property type="entry name" value="Trigger_factor"/>
    <property type="match status" value="1"/>
</dbReference>
<dbReference type="SUPFAM" id="SSF54534">
    <property type="entry name" value="FKBP-like"/>
    <property type="match status" value="1"/>
</dbReference>
<dbReference type="SUPFAM" id="SSF109998">
    <property type="entry name" value="Triger factor/SurA peptide-binding domain-like"/>
    <property type="match status" value="1"/>
</dbReference>
<dbReference type="SUPFAM" id="SSF102735">
    <property type="entry name" value="Trigger factor ribosome-binding domain"/>
    <property type="match status" value="1"/>
</dbReference>
<dbReference type="PROSITE" id="PS50059">
    <property type="entry name" value="FKBP_PPIASE"/>
    <property type="match status" value="1"/>
</dbReference>
<keyword id="KW-0131">Cell cycle</keyword>
<keyword id="KW-0132">Cell division</keyword>
<keyword id="KW-0143">Chaperone</keyword>
<keyword id="KW-0963">Cytoplasm</keyword>
<keyword id="KW-0413">Isomerase</keyword>
<keyword id="KW-0697">Rotamase</keyword>
<sequence length="438" mass="48176">MVDIIKTNATFKAGKGNKGTLSFEIPAKQISSGIDQAFNKQKDKINIPGFRKGHVSKELFLARFGEEALYEDALNAILPDIYDQAVNEADITVVGQPQIIPDDLKHGGPSKIHAEVTLAPTVELGDYKGVEVEKESDEVSDKELNAELERLQKGEAELVPAKEDQVSEKGDTVVIDFDGSVDGKQFDGGKAQNFSLSLGSGQFIPGFEDQLVGHKAGDDVDVKVTFPKDYQAKNLAGKEAVFAVTIHELKKLETPALDNEFAKDVDDSVLVLEELKAKTKEKLAKDKAEKNKDAFEDAAIQKVVDGAKINPEKLPEEMINDDVSRQMQTFFNNLAGQGVKPEMYFQIPNQPGAVKATNDRRRTNRVKTNLVLEEIARVEKINPSNEEIDKEIKSLASEYNIKESEVEKSVSAGMLSHDLKVQQAVELIVNSAQAVEKK</sequence>
<protein>
    <recommendedName>
        <fullName>Trigger factor</fullName>
        <shortName>TF</shortName>
        <ecNumber>5.2.1.8</ecNumber>
    </recommendedName>
    <alternativeName>
        <fullName>PPIase</fullName>
    </alternativeName>
</protein>
<proteinExistence type="inferred from homology"/>
<accession>Q9RLJ3</accession>
<organism>
    <name type="scientific">Oenococcus oeni</name>
    <name type="common">Leuconostoc oenos</name>
    <dbReference type="NCBI Taxonomy" id="1247"/>
    <lineage>
        <taxon>Bacteria</taxon>
        <taxon>Bacillati</taxon>
        <taxon>Bacillota</taxon>
        <taxon>Bacilli</taxon>
        <taxon>Lactobacillales</taxon>
        <taxon>Lactobacillaceae</taxon>
        <taxon>Oenococcus</taxon>
    </lineage>
</organism>
<name>TIG_OENOE</name>
<evidence type="ECO:0000250" key="1"/>
<evidence type="ECO:0000305" key="2"/>
<reference key="1">
    <citation type="journal article" date="1999" name="J. Bacteriol.">
        <title>The Oenococcus oeni clpx homologue is a heat shock gene preferentially expressed in exponential growth phase.</title>
        <authorList>
            <person name="Jobin M.P."/>
            <person name="Garmyn D."/>
            <person name="Divies C."/>
            <person name="Guzzo J."/>
        </authorList>
    </citation>
    <scope>NUCLEOTIDE SEQUENCE [GENOMIC DNA]</scope>
    <source>
        <strain>8413</strain>
    </source>
</reference>
<gene>
    <name type="primary">tig</name>
</gene>
<feature type="chain" id="PRO_0000179398" description="Trigger factor">
    <location>
        <begin position="1"/>
        <end position="438"/>
    </location>
</feature>
<feature type="domain" description="PPIase FKBP-type">
    <location>
        <begin position="170"/>
        <end position="255"/>
    </location>
</feature>
<comment type="function">
    <text evidence="1">Involved in protein export. Acts as a chaperone by maintaining the newly synthesized protein in an open conformation. Functions as a peptidyl-prolyl cis-trans isomerase (By similarity).</text>
</comment>
<comment type="catalytic activity">
    <reaction>
        <text>[protein]-peptidylproline (omega=180) = [protein]-peptidylproline (omega=0)</text>
        <dbReference type="Rhea" id="RHEA:16237"/>
        <dbReference type="Rhea" id="RHEA-COMP:10747"/>
        <dbReference type="Rhea" id="RHEA-COMP:10748"/>
        <dbReference type="ChEBI" id="CHEBI:83833"/>
        <dbReference type="ChEBI" id="CHEBI:83834"/>
        <dbReference type="EC" id="5.2.1.8"/>
    </reaction>
</comment>
<comment type="subcellular location">
    <subcellularLocation>
        <location>Cytoplasm</location>
    </subcellularLocation>
    <text evidence="1">About half TF is bound to the ribosome near the polypeptide exit tunnel while the other half is free in the cytoplasm.</text>
</comment>
<comment type="domain">
    <text evidence="1">Consists of 3 domains; the N-terminus binds the ribosome, the middle domain has PPIase activity, while the C-terminus has intrinsic chaperone activity on its own.</text>
</comment>
<comment type="similarity">
    <text evidence="2">Belongs to the FKBP-type PPIase family. Tig subfamily.</text>
</comment>